<reference key="1">
    <citation type="journal article" date="1997" name="Gene">
        <title>Cloning and sequencing of a 35.7 kb in the 70 degree-73 degree region of the Bacillus subtilis genome reveal genes for a new two-component system, three spore germination proteins, an iron uptake system and a general stress response protein.</title>
        <authorList>
            <person name="Yamamoto H."/>
            <person name="Uchiyama S."/>
            <person name="Nugroho F.A."/>
            <person name="Sekiguchi J."/>
        </authorList>
    </citation>
    <scope>NUCLEOTIDE SEQUENCE [GENOMIC DNA]</scope>
    <source>
        <strain>168 / AC327</strain>
    </source>
</reference>
<reference key="2">
    <citation type="journal article" date="1997" name="Nature">
        <title>The complete genome sequence of the Gram-positive bacterium Bacillus subtilis.</title>
        <authorList>
            <person name="Kunst F."/>
            <person name="Ogasawara N."/>
            <person name="Moszer I."/>
            <person name="Albertini A.M."/>
            <person name="Alloni G."/>
            <person name="Azevedo V."/>
            <person name="Bertero M.G."/>
            <person name="Bessieres P."/>
            <person name="Bolotin A."/>
            <person name="Borchert S."/>
            <person name="Borriss R."/>
            <person name="Boursier L."/>
            <person name="Brans A."/>
            <person name="Braun M."/>
            <person name="Brignell S.C."/>
            <person name="Bron S."/>
            <person name="Brouillet S."/>
            <person name="Bruschi C.V."/>
            <person name="Caldwell B."/>
            <person name="Capuano V."/>
            <person name="Carter N.M."/>
            <person name="Choi S.-K."/>
            <person name="Codani J.-J."/>
            <person name="Connerton I.F."/>
            <person name="Cummings N.J."/>
            <person name="Daniel R.A."/>
            <person name="Denizot F."/>
            <person name="Devine K.M."/>
            <person name="Duesterhoeft A."/>
            <person name="Ehrlich S.D."/>
            <person name="Emmerson P.T."/>
            <person name="Entian K.-D."/>
            <person name="Errington J."/>
            <person name="Fabret C."/>
            <person name="Ferrari E."/>
            <person name="Foulger D."/>
            <person name="Fritz C."/>
            <person name="Fujita M."/>
            <person name="Fujita Y."/>
            <person name="Fuma S."/>
            <person name="Galizzi A."/>
            <person name="Galleron N."/>
            <person name="Ghim S.-Y."/>
            <person name="Glaser P."/>
            <person name="Goffeau A."/>
            <person name="Golightly E.J."/>
            <person name="Grandi G."/>
            <person name="Guiseppi G."/>
            <person name="Guy B.J."/>
            <person name="Haga K."/>
            <person name="Haiech J."/>
            <person name="Harwood C.R."/>
            <person name="Henaut A."/>
            <person name="Hilbert H."/>
            <person name="Holsappel S."/>
            <person name="Hosono S."/>
            <person name="Hullo M.-F."/>
            <person name="Itaya M."/>
            <person name="Jones L.-M."/>
            <person name="Joris B."/>
            <person name="Karamata D."/>
            <person name="Kasahara Y."/>
            <person name="Klaerr-Blanchard M."/>
            <person name="Klein C."/>
            <person name="Kobayashi Y."/>
            <person name="Koetter P."/>
            <person name="Koningstein G."/>
            <person name="Krogh S."/>
            <person name="Kumano M."/>
            <person name="Kurita K."/>
            <person name="Lapidus A."/>
            <person name="Lardinois S."/>
            <person name="Lauber J."/>
            <person name="Lazarevic V."/>
            <person name="Lee S.-M."/>
            <person name="Levine A."/>
            <person name="Liu H."/>
            <person name="Masuda S."/>
            <person name="Mauel C."/>
            <person name="Medigue C."/>
            <person name="Medina N."/>
            <person name="Mellado R.P."/>
            <person name="Mizuno M."/>
            <person name="Moestl D."/>
            <person name="Nakai S."/>
            <person name="Noback M."/>
            <person name="Noone D."/>
            <person name="O'Reilly M."/>
            <person name="Ogawa K."/>
            <person name="Ogiwara A."/>
            <person name="Oudega B."/>
            <person name="Park S.-H."/>
            <person name="Parro V."/>
            <person name="Pohl T.M."/>
            <person name="Portetelle D."/>
            <person name="Porwollik S."/>
            <person name="Prescott A.M."/>
            <person name="Presecan E."/>
            <person name="Pujic P."/>
            <person name="Purnelle B."/>
            <person name="Rapoport G."/>
            <person name="Rey M."/>
            <person name="Reynolds S."/>
            <person name="Rieger M."/>
            <person name="Rivolta C."/>
            <person name="Rocha E."/>
            <person name="Roche B."/>
            <person name="Rose M."/>
            <person name="Sadaie Y."/>
            <person name="Sato T."/>
            <person name="Scanlan E."/>
            <person name="Schleich S."/>
            <person name="Schroeter R."/>
            <person name="Scoffone F."/>
            <person name="Sekiguchi J."/>
            <person name="Sekowska A."/>
            <person name="Seror S.J."/>
            <person name="Serror P."/>
            <person name="Shin B.-S."/>
            <person name="Soldo B."/>
            <person name="Sorokin A."/>
            <person name="Tacconi E."/>
            <person name="Takagi T."/>
            <person name="Takahashi H."/>
            <person name="Takemaru K."/>
            <person name="Takeuchi M."/>
            <person name="Tamakoshi A."/>
            <person name="Tanaka T."/>
            <person name="Terpstra P."/>
            <person name="Tognoni A."/>
            <person name="Tosato V."/>
            <person name="Uchiyama S."/>
            <person name="Vandenbol M."/>
            <person name="Vannier F."/>
            <person name="Vassarotti A."/>
            <person name="Viari A."/>
            <person name="Wambutt R."/>
            <person name="Wedler E."/>
            <person name="Wedler H."/>
            <person name="Weitzenegger T."/>
            <person name="Winters P."/>
            <person name="Wipat A."/>
            <person name="Yamamoto H."/>
            <person name="Yamane K."/>
            <person name="Yasumoto K."/>
            <person name="Yata K."/>
            <person name="Yoshida K."/>
            <person name="Yoshikawa H.-F."/>
            <person name="Zumstein E."/>
            <person name="Yoshikawa H."/>
            <person name="Danchin A."/>
        </authorList>
    </citation>
    <scope>NUCLEOTIDE SEQUENCE [LARGE SCALE GENOMIC DNA]</scope>
    <source>
        <strain>168</strain>
    </source>
</reference>
<reference key="3">
    <citation type="journal article" date="2000" name="J. Bacteriol.">
        <title>Role of ger proteins in nutrient and nonnutrient triggering of spore germination in Bacillus subtilis.</title>
        <authorList>
            <person name="Paidhungat M."/>
            <person name="Setlow P."/>
        </authorList>
    </citation>
    <scope>FUNCTION</scope>
</reference>
<name>YFKT_BACSU</name>
<keyword id="KW-1003">Cell membrane</keyword>
<keyword id="KW-0309">Germination</keyword>
<keyword id="KW-0472">Membrane</keyword>
<keyword id="KW-1185">Reference proteome</keyword>
<keyword id="KW-0812">Transmembrane</keyword>
<keyword id="KW-1133">Transmembrane helix</keyword>
<keyword id="KW-0813">Transport</keyword>
<gene>
    <name type="primary">yfkT</name>
    <name type="ordered locus">BSU07760</name>
</gene>
<sequence length="358" mass="40357">MDKTSAYQGLFFGALYTLAVGLKHAPILMIESAKQNAWHSYILGVVIVIPALWLMHRLMKKHQDKNIYELLSDSSPIAGRIIILLFSLYFLLINAHDIRFFINLINILFLPRTPMAVLGGVIIFVAICIAREGKETLTRMAQIFLFPFGILVLFLPFTLATQIELQNLTPVFEGLIPYLQSGYYAFGTMGELIILPLLFSNRSVPLKYTIFAILLGALLLAVMLFSSISVFGPNLTSTFFDPAYMVIRQIRITDFLDRSDLIIAAFWIPVIMVKIAGSLYIVVYGLSFLHSKIDPKAMYTPTGMFSVVCGFWFFLNTNQLIDFNRIKPIINVVISLLLPLLIYLIIKSKALFGAKAKH</sequence>
<dbReference type="EMBL" id="D86417">
    <property type="protein sequence ID" value="BAA22293.1"/>
    <property type="molecule type" value="Genomic_DNA"/>
</dbReference>
<dbReference type="EMBL" id="AL009126">
    <property type="protein sequence ID" value="CAB12605.1"/>
    <property type="molecule type" value="Genomic_DNA"/>
</dbReference>
<dbReference type="PIR" id="F69809">
    <property type="entry name" value="F69809"/>
</dbReference>
<dbReference type="RefSeq" id="NP_388657.1">
    <property type="nucleotide sequence ID" value="NC_000964.3"/>
</dbReference>
<dbReference type="RefSeq" id="WP_003243872.1">
    <property type="nucleotide sequence ID" value="NZ_OZ025638.1"/>
</dbReference>
<dbReference type="FunCoup" id="O34573">
    <property type="interactions" value="7"/>
</dbReference>
<dbReference type="STRING" id="224308.BSU07760"/>
<dbReference type="PaxDb" id="224308-BSU07760"/>
<dbReference type="EnsemblBacteria" id="CAB12605">
    <property type="protein sequence ID" value="CAB12605"/>
    <property type="gene ID" value="BSU_07760"/>
</dbReference>
<dbReference type="GeneID" id="936135"/>
<dbReference type="KEGG" id="bsu:BSU07760"/>
<dbReference type="PATRIC" id="fig|224308.179.peg.840"/>
<dbReference type="eggNOG" id="COG0531">
    <property type="taxonomic scope" value="Bacteria"/>
</dbReference>
<dbReference type="InParanoid" id="O34573"/>
<dbReference type="OrthoDB" id="2829675at2"/>
<dbReference type="BioCyc" id="BSUB:BSU07760-MONOMER"/>
<dbReference type="Proteomes" id="UP000001570">
    <property type="component" value="Chromosome"/>
</dbReference>
<dbReference type="GO" id="GO:0005886">
    <property type="term" value="C:plasma membrane"/>
    <property type="evidence" value="ECO:0007669"/>
    <property type="project" value="UniProtKB-SubCell"/>
</dbReference>
<dbReference type="GO" id="GO:0009847">
    <property type="term" value="P:spore germination"/>
    <property type="evidence" value="ECO:0007669"/>
    <property type="project" value="InterPro"/>
</dbReference>
<dbReference type="InterPro" id="IPR004761">
    <property type="entry name" value="Spore_GerAB"/>
</dbReference>
<dbReference type="NCBIfam" id="TIGR00912">
    <property type="entry name" value="2A0309"/>
    <property type="match status" value="1"/>
</dbReference>
<dbReference type="PANTHER" id="PTHR34975">
    <property type="entry name" value="SPORE GERMINATION PROTEIN A2"/>
    <property type="match status" value="1"/>
</dbReference>
<dbReference type="PANTHER" id="PTHR34975:SF2">
    <property type="entry name" value="SPORE GERMINATION PROTEIN A2"/>
    <property type="match status" value="1"/>
</dbReference>
<dbReference type="Pfam" id="PF03845">
    <property type="entry name" value="Spore_permease"/>
    <property type="match status" value="1"/>
</dbReference>
<accession>O34573</accession>
<accession>Q79EU2</accession>
<evidence type="ECO:0000255" key="1"/>
<evidence type="ECO:0000269" key="2">
    <source>
    </source>
</evidence>
<evidence type="ECO:0000305" key="3"/>
<protein>
    <recommendedName>
        <fullName>Putative spore germination protein YfkT</fullName>
    </recommendedName>
</protein>
<proteinExistence type="inferred from homology"/>
<comment type="function">
    <text evidence="2">May be involved in spore germination.</text>
</comment>
<comment type="subcellular location">
    <subcellularLocation>
        <location evidence="3">Cell membrane</location>
        <topology evidence="3">Multi-pass membrane protein</topology>
    </subcellularLocation>
</comment>
<comment type="similarity">
    <text evidence="3">Belongs to the amino acid-polyamine-organocation (APC) superfamily. Spore germination protein (SGP) (TC 2.A.3.9) family.</text>
</comment>
<organism>
    <name type="scientific">Bacillus subtilis (strain 168)</name>
    <dbReference type="NCBI Taxonomy" id="224308"/>
    <lineage>
        <taxon>Bacteria</taxon>
        <taxon>Bacillati</taxon>
        <taxon>Bacillota</taxon>
        <taxon>Bacilli</taxon>
        <taxon>Bacillales</taxon>
        <taxon>Bacillaceae</taxon>
        <taxon>Bacillus</taxon>
    </lineage>
</organism>
<feature type="chain" id="PRO_0000360157" description="Putative spore germination protein YfkT">
    <location>
        <begin position="1"/>
        <end position="358"/>
    </location>
</feature>
<feature type="transmembrane region" description="Helical" evidence="1">
    <location>
        <begin position="10"/>
        <end position="30"/>
    </location>
</feature>
<feature type="transmembrane region" description="Helical" evidence="1">
    <location>
        <begin position="36"/>
        <end position="56"/>
    </location>
</feature>
<feature type="transmembrane region" description="Helical" evidence="1">
    <location>
        <begin position="81"/>
        <end position="101"/>
    </location>
</feature>
<feature type="transmembrane region" description="Helical" evidence="1">
    <location>
        <begin position="107"/>
        <end position="127"/>
    </location>
</feature>
<feature type="transmembrane region" description="Helical" evidence="1">
    <location>
        <begin position="143"/>
        <end position="163"/>
    </location>
</feature>
<feature type="transmembrane region" description="Helical" evidence="1">
    <location>
        <begin position="179"/>
        <end position="199"/>
    </location>
</feature>
<feature type="transmembrane region" description="Helical" evidence="1">
    <location>
        <begin position="210"/>
        <end position="230"/>
    </location>
</feature>
<feature type="transmembrane region" description="Helical" evidence="1">
    <location>
        <begin position="262"/>
        <end position="282"/>
    </location>
</feature>
<feature type="transmembrane region" description="Helical" evidence="1">
    <location>
        <begin position="297"/>
        <end position="317"/>
    </location>
</feature>
<feature type="transmembrane region" description="Helical" evidence="1">
    <location>
        <begin position="326"/>
        <end position="346"/>
    </location>
</feature>